<reference key="1">
    <citation type="submission" date="2006-06" db="EMBL/GenBank/DDBJ databases">
        <title>Complete sequence of chromosome of Mesorhizobium sp. BNC1.</title>
        <authorList>
            <consortium name="US DOE Joint Genome Institute"/>
            <person name="Copeland A."/>
            <person name="Lucas S."/>
            <person name="Lapidus A."/>
            <person name="Barry K."/>
            <person name="Detter J.C."/>
            <person name="Glavina del Rio T."/>
            <person name="Hammon N."/>
            <person name="Israni S."/>
            <person name="Dalin E."/>
            <person name="Tice H."/>
            <person name="Pitluck S."/>
            <person name="Chertkov O."/>
            <person name="Brettin T."/>
            <person name="Bruce D."/>
            <person name="Han C."/>
            <person name="Tapia R."/>
            <person name="Gilna P."/>
            <person name="Schmutz J."/>
            <person name="Larimer F."/>
            <person name="Land M."/>
            <person name="Hauser L."/>
            <person name="Kyrpides N."/>
            <person name="Mikhailova N."/>
            <person name="Richardson P."/>
        </authorList>
    </citation>
    <scope>NUCLEOTIDE SEQUENCE [LARGE SCALE GENOMIC DNA]</scope>
    <source>
        <strain>BNC1</strain>
    </source>
</reference>
<feature type="chain" id="PRO_1000060468" description="Probable transaldolase">
    <location>
        <begin position="1"/>
        <end position="217"/>
    </location>
</feature>
<feature type="active site" description="Schiff-base intermediate with substrate" evidence="1">
    <location>
        <position position="83"/>
    </location>
</feature>
<dbReference type="EC" id="2.2.1.2" evidence="1"/>
<dbReference type="EMBL" id="CP000390">
    <property type="protein sequence ID" value="ABG64584.1"/>
    <property type="molecule type" value="Genomic_DNA"/>
</dbReference>
<dbReference type="SMR" id="Q11DE1"/>
<dbReference type="STRING" id="266779.Meso_3212"/>
<dbReference type="KEGG" id="mes:Meso_3212"/>
<dbReference type="eggNOG" id="COG0176">
    <property type="taxonomic scope" value="Bacteria"/>
</dbReference>
<dbReference type="HOGENOM" id="CLU_079764_0_0_5"/>
<dbReference type="OrthoDB" id="9807051at2"/>
<dbReference type="UniPathway" id="UPA00115">
    <property type="reaction ID" value="UER00414"/>
</dbReference>
<dbReference type="GO" id="GO:0005737">
    <property type="term" value="C:cytoplasm"/>
    <property type="evidence" value="ECO:0007669"/>
    <property type="project" value="UniProtKB-SubCell"/>
</dbReference>
<dbReference type="GO" id="GO:0016832">
    <property type="term" value="F:aldehyde-lyase activity"/>
    <property type="evidence" value="ECO:0007669"/>
    <property type="project" value="InterPro"/>
</dbReference>
<dbReference type="GO" id="GO:0004801">
    <property type="term" value="F:transaldolase activity"/>
    <property type="evidence" value="ECO:0007669"/>
    <property type="project" value="UniProtKB-UniRule"/>
</dbReference>
<dbReference type="GO" id="GO:0005975">
    <property type="term" value="P:carbohydrate metabolic process"/>
    <property type="evidence" value="ECO:0007669"/>
    <property type="project" value="InterPro"/>
</dbReference>
<dbReference type="GO" id="GO:0006098">
    <property type="term" value="P:pentose-phosphate shunt"/>
    <property type="evidence" value="ECO:0007669"/>
    <property type="project" value="UniProtKB-UniRule"/>
</dbReference>
<dbReference type="CDD" id="cd00956">
    <property type="entry name" value="Transaldolase_FSA"/>
    <property type="match status" value="1"/>
</dbReference>
<dbReference type="FunFam" id="3.20.20.70:FF:000018">
    <property type="entry name" value="Probable transaldolase"/>
    <property type="match status" value="1"/>
</dbReference>
<dbReference type="Gene3D" id="3.20.20.70">
    <property type="entry name" value="Aldolase class I"/>
    <property type="match status" value="1"/>
</dbReference>
<dbReference type="HAMAP" id="MF_00494">
    <property type="entry name" value="Transaldolase_3b"/>
    <property type="match status" value="1"/>
</dbReference>
<dbReference type="InterPro" id="IPR013785">
    <property type="entry name" value="Aldolase_TIM"/>
</dbReference>
<dbReference type="InterPro" id="IPR001585">
    <property type="entry name" value="TAL/FSA"/>
</dbReference>
<dbReference type="InterPro" id="IPR022999">
    <property type="entry name" value="Transaldolase_3B"/>
</dbReference>
<dbReference type="InterPro" id="IPR004731">
    <property type="entry name" value="Transaldolase_3B/F6P_aldolase"/>
</dbReference>
<dbReference type="InterPro" id="IPR018225">
    <property type="entry name" value="Transaldolase_AS"/>
</dbReference>
<dbReference type="InterPro" id="IPR033919">
    <property type="entry name" value="TSA/FSA_arc/bac"/>
</dbReference>
<dbReference type="NCBIfam" id="TIGR00875">
    <property type="entry name" value="fsa_talC_mipB"/>
    <property type="match status" value="1"/>
</dbReference>
<dbReference type="PANTHER" id="PTHR10683:SF40">
    <property type="entry name" value="FRUCTOSE-6-PHOSPHATE ALDOLASE 1-RELATED"/>
    <property type="match status" value="1"/>
</dbReference>
<dbReference type="PANTHER" id="PTHR10683">
    <property type="entry name" value="TRANSALDOLASE"/>
    <property type="match status" value="1"/>
</dbReference>
<dbReference type="Pfam" id="PF00923">
    <property type="entry name" value="TAL_FSA"/>
    <property type="match status" value="1"/>
</dbReference>
<dbReference type="SUPFAM" id="SSF51569">
    <property type="entry name" value="Aldolase"/>
    <property type="match status" value="1"/>
</dbReference>
<dbReference type="PROSITE" id="PS01054">
    <property type="entry name" value="TRANSALDOLASE_1"/>
    <property type="match status" value="1"/>
</dbReference>
<dbReference type="PROSITE" id="PS00958">
    <property type="entry name" value="TRANSALDOLASE_2"/>
    <property type="match status" value="1"/>
</dbReference>
<evidence type="ECO:0000255" key="1">
    <source>
        <dbReference type="HAMAP-Rule" id="MF_00494"/>
    </source>
</evidence>
<comment type="function">
    <text evidence="1">Transaldolase is important for the balance of metabolites in the pentose-phosphate pathway.</text>
</comment>
<comment type="catalytic activity">
    <reaction evidence="1">
        <text>D-sedoheptulose 7-phosphate + D-glyceraldehyde 3-phosphate = D-erythrose 4-phosphate + beta-D-fructose 6-phosphate</text>
        <dbReference type="Rhea" id="RHEA:17053"/>
        <dbReference type="ChEBI" id="CHEBI:16897"/>
        <dbReference type="ChEBI" id="CHEBI:57483"/>
        <dbReference type="ChEBI" id="CHEBI:57634"/>
        <dbReference type="ChEBI" id="CHEBI:59776"/>
        <dbReference type="EC" id="2.2.1.2"/>
    </reaction>
</comment>
<comment type="pathway">
    <text evidence="1">Carbohydrate degradation; pentose phosphate pathway; D-glyceraldehyde 3-phosphate and beta-D-fructose 6-phosphate from D-ribose 5-phosphate and D-xylulose 5-phosphate (non-oxidative stage): step 2/3.</text>
</comment>
<comment type="subcellular location">
    <subcellularLocation>
        <location evidence="1">Cytoplasm</location>
    </subcellularLocation>
</comment>
<comment type="similarity">
    <text evidence="1">Belongs to the transaldolase family. Type 3B subfamily.</text>
</comment>
<proteinExistence type="inferred from homology"/>
<organism>
    <name type="scientific">Chelativorans sp. (strain BNC1)</name>
    <dbReference type="NCBI Taxonomy" id="266779"/>
    <lineage>
        <taxon>Bacteria</taxon>
        <taxon>Pseudomonadati</taxon>
        <taxon>Pseudomonadota</taxon>
        <taxon>Alphaproteobacteria</taxon>
        <taxon>Hyphomicrobiales</taxon>
        <taxon>Phyllobacteriaceae</taxon>
        <taxon>Chelativorans</taxon>
    </lineage>
</organism>
<gene>
    <name evidence="1" type="primary">tal</name>
    <name type="ordered locus">Meso_3212</name>
</gene>
<sequence>MKFFVDTADVNEIRELSETGLLDGVTTNPSLIMKSGRPILEVTREICEIVDGPVSAEVTAVDFKEMMREADILSKIADNIAIKVPLTMDGLKACKALTSSGRMVNVTLCFSANQALLAAKAGATFISPFIGRIDDMGIDGMELIAEIRTIYDNYDFDTEILAASIRSVNHVKQAAIIGADVATVPPAVLKSLVKHPLTDKGLEAFLADWAKTGQKIG</sequence>
<keyword id="KW-0963">Cytoplasm</keyword>
<keyword id="KW-0570">Pentose shunt</keyword>
<keyword id="KW-0704">Schiff base</keyword>
<keyword id="KW-0808">Transferase</keyword>
<accession>Q11DE1</accession>
<name>TAL_CHESB</name>
<protein>
    <recommendedName>
        <fullName evidence="1">Probable transaldolase</fullName>
        <ecNumber evidence="1">2.2.1.2</ecNumber>
    </recommendedName>
</protein>